<dbReference type="EC" id="5.4.3.8" evidence="1"/>
<dbReference type="EMBL" id="AE005674">
    <property type="protein sequence ID" value="AAN41809.1"/>
    <property type="molecule type" value="Genomic_DNA"/>
</dbReference>
<dbReference type="EMBL" id="AE014073">
    <property type="protein sequence ID" value="AAP15690.1"/>
    <property type="molecule type" value="Genomic_DNA"/>
</dbReference>
<dbReference type="RefSeq" id="NP_706102.1">
    <property type="nucleotide sequence ID" value="NC_004337.2"/>
</dbReference>
<dbReference type="RefSeq" id="WP_000045281.1">
    <property type="nucleotide sequence ID" value="NZ_WPGW01000006.1"/>
</dbReference>
<dbReference type="SMR" id="Q821C1"/>
<dbReference type="STRING" id="198214.SF0146"/>
<dbReference type="PaxDb" id="198214-SF0146"/>
<dbReference type="GeneID" id="1024471"/>
<dbReference type="KEGG" id="sfl:SF0146"/>
<dbReference type="KEGG" id="sfx:S0149"/>
<dbReference type="PATRIC" id="fig|198214.7.peg.164"/>
<dbReference type="HOGENOM" id="CLU_016922_1_5_6"/>
<dbReference type="UniPathway" id="UPA00251">
    <property type="reaction ID" value="UER00317"/>
</dbReference>
<dbReference type="Proteomes" id="UP000001006">
    <property type="component" value="Chromosome"/>
</dbReference>
<dbReference type="Proteomes" id="UP000002673">
    <property type="component" value="Chromosome"/>
</dbReference>
<dbReference type="GO" id="GO:0005737">
    <property type="term" value="C:cytoplasm"/>
    <property type="evidence" value="ECO:0007669"/>
    <property type="project" value="UniProtKB-SubCell"/>
</dbReference>
<dbReference type="GO" id="GO:0042286">
    <property type="term" value="F:glutamate-1-semialdehyde 2,1-aminomutase activity"/>
    <property type="evidence" value="ECO:0007669"/>
    <property type="project" value="UniProtKB-UniRule"/>
</dbReference>
<dbReference type="GO" id="GO:0030170">
    <property type="term" value="F:pyridoxal phosphate binding"/>
    <property type="evidence" value="ECO:0007669"/>
    <property type="project" value="InterPro"/>
</dbReference>
<dbReference type="GO" id="GO:0008483">
    <property type="term" value="F:transaminase activity"/>
    <property type="evidence" value="ECO:0007669"/>
    <property type="project" value="InterPro"/>
</dbReference>
<dbReference type="GO" id="GO:0006782">
    <property type="term" value="P:protoporphyrinogen IX biosynthetic process"/>
    <property type="evidence" value="ECO:0007669"/>
    <property type="project" value="UniProtKB-UniRule"/>
</dbReference>
<dbReference type="CDD" id="cd00610">
    <property type="entry name" value="OAT_like"/>
    <property type="match status" value="1"/>
</dbReference>
<dbReference type="FunFam" id="3.40.640.10:FF:000021">
    <property type="entry name" value="Glutamate-1-semialdehyde 2,1-aminomutase"/>
    <property type="match status" value="1"/>
</dbReference>
<dbReference type="FunFam" id="3.90.1150.10:FF:000012">
    <property type="entry name" value="Glutamate-1-semialdehyde 2,1-aminomutase"/>
    <property type="match status" value="1"/>
</dbReference>
<dbReference type="Gene3D" id="3.90.1150.10">
    <property type="entry name" value="Aspartate Aminotransferase, domain 1"/>
    <property type="match status" value="1"/>
</dbReference>
<dbReference type="Gene3D" id="3.40.640.10">
    <property type="entry name" value="Type I PLP-dependent aspartate aminotransferase-like (Major domain)"/>
    <property type="match status" value="1"/>
</dbReference>
<dbReference type="HAMAP" id="MF_00375">
    <property type="entry name" value="HemL_aminotrans_3"/>
    <property type="match status" value="1"/>
</dbReference>
<dbReference type="InterPro" id="IPR004639">
    <property type="entry name" value="4pyrrol_synth_GluAld_NH2Trfase"/>
</dbReference>
<dbReference type="InterPro" id="IPR005814">
    <property type="entry name" value="Aminotrans_3"/>
</dbReference>
<dbReference type="InterPro" id="IPR049704">
    <property type="entry name" value="Aminotrans_3_PPA_site"/>
</dbReference>
<dbReference type="InterPro" id="IPR015424">
    <property type="entry name" value="PyrdxlP-dep_Trfase"/>
</dbReference>
<dbReference type="InterPro" id="IPR015421">
    <property type="entry name" value="PyrdxlP-dep_Trfase_major"/>
</dbReference>
<dbReference type="InterPro" id="IPR015422">
    <property type="entry name" value="PyrdxlP-dep_Trfase_small"/>
</dbReference>
<dbReference type="NCBIfam" id="TIGR00713">
    <property type="entry name" value="hemL"/>
    <property type="match status" value="1"/>
</dbReference>
<dbReference type="NCBIfam" id="NF000818">
    <property type="entry name" value="PRK00062.1"/>
    <property type="match status" value="1"/>
</dbReference>
<dbReference type="PANTHER" id="PTHR43713">
    <property type="entry name" value="GLUTAMATE-1-SEMIALDEHYDE 2,1-AMINOMUTASE"/>
    <property type="match status" value="1"/>
</dbReference>
<dbReference type="PANTHER" id="PTHR43713:SF3">
    <property type="entry name" value="GLUTAMATE-1-SEMIALDEHYDE 2,1-AMINOMUTASE 1, CHLOROPLASTIC-RELATED"/>
    <property type="match status" value="1"/>
</dbReference>
<dbReference type="Pfam" id="PF00202">
    <property type="entry name" value="Aminotran_3"/>
    <property type="match status" value="1"/>
</dbReference>
<dbReference type="SUPFAM" id="SSF53383">
    <property type="entry name" value="PLP-dependent transferases"/>
    <property type="match status" value="1"/>
</dbReference>
<dbReference type="PROSITE" id="PS00600">
    <property type="entry name" value="AA_TRANSFER_CLASS_3"/>
    <property type="match status" value="1"/>
</dbReference>
<organism>
    <name type="scientific">Shigella flexneri</name>
    <dbReference type="NCBI Taxonomy" id="623"/>
    <lineage>
        <taxon>Bacteria</taxon>
        <taxon>Pseudomonadati</taxon>
        <taxon>Pseudomonadota</taxon>
        <taxon>Gammaproteobacteria</taxon>
        <taxon>Enterobacterales</taxon>
        <taxon>Enterobacteriaceae</taxon>
        <taxon>Shigella</taxon>
    </lineage>
</organism>
<proteinExistence type="inferred from homology"/>
<keyword id="KW-0963">Cytoplasm</keyword>
<keyword id="KW-0413">Isomerase</keyword>
<keyword id="KW-0627">Porphyrin biosynthesis</keyword>
<keyword id="KW-0663">Pyridoxal phosphate</keyword>
<keyword id="KW-1185">Reference proteome</keyword>
<evidence type="ECO:0000255" key="1">
    <source>
        <dbReference type="HAMAP-Rule" id="MF_00375"/>
    </source>
</evidence>
<reference key="1">
    <citation type="journal article" date="2002" name="Nucleic Acids Res.">
        <title>Genome sequence of Shigella flexneri 2a: insights into pathogenicity through comparison with genomes of Escherichia coli K12 and O157.</title>
        <authorList>
            <person name="Jin Q."/>
            <person name="Yuan Z."/>
            <person name="Xu J."/>
            <person name="Wang Y."/>
            <person name="Shen Y."/>
            <person name="Lu W."/>
            <person name="Wang J."/>
            <person name="Liu H."/>
            <person name="Yang J."/>
            <person name="Yang F."/>
            <person name="Zhang X."/>
            <person name="Zhang J."/>
            <person name="Yang G."/>
            <person name="Wu H."/>
            <person name="Qu D."/>
            <person name="Dong J."/>
            <person name="Sun L."/>
            <person name="Xue Y."/>
            <person name="Zhao A."/>
            <person name="Gao Y."/>
            <person name="Zhu J."/>
            <person name="Kan B."/>
            <person name="Ding K."/>
            <person name="Chen S."/>
            <person name="Cheng H."/>
            <person name="Yao Z."/>
            <person name="He B."/>
            <person name="Chen R."/>
            <person name="Ma D."/>
            <person name="Qiang B."/>
            <person name="Wen Y."/>
            <person name="Hou Y."/>
            <person name="Yu J."/>
        </authorList>
    </citation>
    <scope>NUCLEOTIDE SEQUENCE [LARGE SCALE GENOMIC DNA]</scope>
    <source>
        <strain>301 / Serotype 2a</strain>
    </source>
</reference>
<reference key="2">
    <citation type="journal article" date="2003" name="Infect. Immun.">
        <title>Complete genome sequence and comparative genomics of Shigella flexneri serotype 2a strain 2457T.</title>
        <authorList>
            <person name="Wei J."/>
            <person name="Goldberg M.B."/>
            <person name="Burland V."/>
            <person name="Venkatesan M.M."/>
            <person name="Deng W."/>
            <person name="Fournier G."/>
            <person name="Mayhew G.F."/>
            <person name="Plunkett G. III"/>
            <person name="Rose D.J."/>
            <person name="Darling A."/>
            <person name="Mau B."/>
            <person name="Perna N.T."/>
            <person name="Payne S.M."/>
            <person name="Runyen-Janecky L.J."/>
            <person name="Zhou S."/>
            <person name="Schwartz D.C."/>
            <person name="Blattner F.R."/>
        </authorList>
    </citation>
    <scope>NUCLEOTIDE SEQUENCE [LARGE SCALE GENOMIC DNA]</scope>
    <source>
        <strain>ATCC 700930 / 2457T / Serotype 2a</strain>
    </source>
</reference>
<name>GSA_SHIFL</name>
<sequence length="426" mass="45352">MSKSENLYSAARELIPGGVNSPVRAFTGVGGTPLFIEKADGAYLYDVDGKAYIDYVGSWGPMVLGHNHPAIRNAVIEAAERGLSFGAPTEMEVKMAQLVTELVPTMDMVRMVNSGTEATMSAIRLARGFTGRDKIIKFEGCYHGHADCLLVKAGSGALTLGQPNSPGVPADFAKHTLTCTYNDLASVRAAFEQYPQEIACIIVEPVAGNMNCVPPLPEFLPGLRALCDEFGALLIIDEVMTGFRVALAGAQDYFAVVPDLTCLGKIIGGGMPVGAFGGRRDVMDALAPTGPVYQAGTLSGNPIAMAAGFACLNEVAQPGIHETLDELTTRLAEGLLEAAEEAGIPLVVNHVGGMFGIFFTDAESVTCYQDVMACDVERFKRFFHMMLDEGVYLAPSAFEAGFMSVAHSMEDINNTIDAARRVFAKL</sequence>
<gene>
    <name evidence="1" type="primary">hemL</name>
    <name type="ordered locus">SF0146</name>
    <name type="ordered locus">S0149</name>
</gene>
<comment type="catalytic activity">
    <reaction evidence="1">
        <text>(S)-4-amino-5-oxopentanoate = 5-aminolevulinate</text>
        <dbReference type="Rhea" id="RHEA:14265"/>
        <dbReference type="ChEBI" id="CHEBI:57501"/>
        <dbReference type="ChEBI" id="CHEBI:356416"/>
        <dbReference type="EC" id="5.4.3.8"/>
    </reaction>
</comment>
<comment type="cofactor">
    <cofactor evidence="1">
        <name>pyridoxal 5'-phosphate</name>
        <dbReference type="ChEBI" id="CHEBI:597326"/>
    </cofactor>
</comment>
<comment type="pathway">
    <text evidence="1">Porphyrin-containing compound metabolism; protoporphyrin-IX biosynthesis; 5-aminolevulinate from L-glutamyl-tRNA(Glu): step 2/2.</text>
</comment>
<comment type="subunit">
    <text evidence="1">Homodimer.</text>
</comment>
<comment type="subcellular location">
    <subcellularLocation>
        <location evidence="1">Cytoplasm</location>
    </subcellularLocation>
</comment>
<comment type="similarity">
    <text evidence="1">Belongs to the class-III pyridoxal-phosphate-dependent aminotransferase family. HemL subfamily.</text>
</comment>
<accession>Q821C1</accession>
<accession>Q7C375</accession>
<protein>
    <recommendedName>
        <fullName evidence="1">Glutamate-1-semialdehyde 2,1-aminomutase</fullName>
        <shortName evidence="1">GSA</shortName>
        <ecNumber evidence="1">5.4.3.8</ecNumber>
    </recommendedName>
    <alternativeName>
        <fullName evidence="1">Glutamate-1-semialdehyde aminotransferase</fullName>
        <shortName evidence="1">GSA-AT</shortName>
    </alternativeName>
</protein>
<feature type="chain" id="PRO_0000120440" description="Glutamate-1-semialdehyde 2,1-aminomutase">
    <location>
        <begin position="1"/>
        <end position="426"/>
    </location>
</feature>
<feature type="modified residue" description="N6-(pyridoxal phosphate)lysine" evidence="1">
    <location>
        <position position="265"/>
    </location>
</feature>